<evidence type="ECO:0000255" key="1">
    <source>
        <dbReference type="HAMAP-Rule" id="MF_00456"/>
    </source>
</evidence>
<organism>
    <name type="scientific">Pectobacterium carotovorum subsp. carotovorum (strain PC1)</name>
    <dbReference type="NCBI Taxonomy" id="561230"/>
    <lineage>
        <taxon>Bacteria</taxon>
        <taxon>Pseudomonadati</taxon>
        <taxon>Pseudomonadota</taxon>
        <taxon>Gammaproteobacteria</taxon>
        <taxon>Enterobacterales</taxon>
        <taxon>Pectobacteriaceae</taxon>
        <taxon>Pectobacterium</taxon>
    </lineage>
</organism>
<protein>
    <recommendedName>
        <fullName evidence="1">Glutamate 5-kinase</fullName>
        <ecNumber evidence="1">2.7.2.11</ecNumber>
    </recommendedName>
    <alternativeName>
        <fullName evidence="1">Gamma-glutamyl kinase</fullName>
        <shortName evidence="1">GK</shortName>
    </alternativeName>
</protein>
<feature type="chain" id="PRO_1000206275" description="Glutamate 5-kinase">
    <location>
        <begin position="1"/>
        <end position="367"/>
    </location>
</feature>
<feature type="domain" description="PUA" evidence="1">
    <location>
        <begin position="275"/>
        <end position="353"/>
    </location>
</feature>
<feature type="binding site" evidence="1">
    <location>
        <position position="10"/>
    </location>
    <ligand>
        <name>ATP</name>
        <dbReference type="ChEBI" id="CHEBI:30616"/>
    </ligand>
</feature>
<feature type="binding site" evidence="1">
    <location>
        <position position="50"/>
    </location>
    <ligand>
        <name>substrate</name>
    </ligand>
</feature>
<feature type="binding site" evidence="1">
    <location>
        <position position="137"/>
    </location>
    <ligand>
        <name>substrate</name>
    </ligand>
</feature>
<feature type="binding site" evidence="1">
    <location>
        <position position="149"/>
    </location>
    <ligand>
        <name>substrate</name>
    </ligand>
</feature>
<feature type="binding site" evidence="1">
    <location>
        <begin position="169"/>
        <end position="170"/>
    </location>
    <ligand>
        <name>ATP</name>
        <dbReference type="ChEBI" id="CHEBI:30616"/>
    </ligand>
</feature>
<feature type="binding site" evidence="1">
    <location>
        <begin position="211"/>
        <end position="217"/>
    </location>
    <ligand>
        <name>ATP</name>
        <dbReference type="ChEBI" id="CHEBI:30616"/>
    </ligand>
</feature>
<dbReference type="EC" id="2.7.2.11" evidence="1"/>
<dbReference type="EMBL" id="CP001657">
    <property type="protein sequence ID" value="ACT14300.1"/>
    <property type="molecule type" value="Genomic_DNA"/>
</dbReference>
<dbReference type="RefSeq" id="WP_015841435.1">
    <property type="nucleotide sequence ID" value="NC_012917.1"/>
</dbReference>
<dbReference type="SMR" id="C6DCX5"/>
<dbReference type="STRING" id="561230.PC1_3284"/>
<dbReference type="GeneID" id="67792919"/>
<dbReference type="KEGG" id="pct:PC1_3284"/>
<dbReference type="eggNOG" id="COG0263">
    <property type="taxonomic scope" value="Bacteria"/>
</dbReference>
<dbReference type="HOGENOM" id="CLU_025400_2_0_6"/>
<dbReference type="OrthoDB" id="9804434at2"/>
<dbReference type="UniPathway" id="UPA00098">
    <property type="reaction ID" value="UER00359"/>
</dbReference>
<dbReference type="Proteomes" id="UP000002736">
    <property type="component" value="Chromosome"/>
</dbReference>
<dbReference type="GO" id="GO:0005829">
    <property type="term" value="C:cytosol"/>
    <property type="evidence" value="ECO:0007669"/>
    <property type="project" value="TreeGrafter"/>
</dbReference>
<dbReference type="GO" id="GO:0005524">
    <property type="term" value="F:ATP binding"/>
    <property type="evidence" value="ECO:0007669"/>
    <property type="project" value="UniProtKB-KW"/>
</dbReference>
<dbReference type="GO" id="GO:0004349">
    <property type="term" value="F:glutamate 5-kinase activity"/>
    <property type="evidence" value="ECO:0007669"/>
    <property type="project" value="UniProtKB-UniRule"/>
</dbReference>
<dbReference type="GO" id="GO:0003723">
    <property type="term" value="F:RNA binding"/>
    <property type="evidence" value="ECO:0007669"/>
    <property type="project" value="InterPro"/>
</dbReference>
<dbReference type="GO" id="GO:0055129">
    <property type="term" value="P:L-proline biosynthetic process"/>
    <property type="evidence" value="ECO:0007669"/>
    <property type="project" value="UniProtKB-UniRule"/>
</dbReference>
<dbReference type="CDD" id="cd04242">
    <property type="entry name" value="AAK_G5K_ProB"/>
    <property type="match status" value="1"/>
</dbReference>
<dbReference type="CDD" id="cd21157">
    <property type="entry name" value="PUA_G5K"/>
    <property type="match status" value="1"/>
</dbReference>
<dbReference type="FunFam" id="2.30.130.10:FF:000003">
    <property type="entry name" value="Glutamate 5-kinase"/>
    <property type="match status" value="1"/>
</dbReference>
<dbReference type="FunFam" id="3.40.1160.10:FF:000006">
    <property type="entry name" value="Glutamate 5-kinase"/>
    <property type="match status" value="1"/>
</dbReference>
<dbReference type="Gene3D" id="3.40.1160.10">
    <property type="entry name" value="Acetylglutamate kinase-like"/>
    <property type="match status" value="2"/>
</dbReference>
<dbReference type="Gene3D" id="2.30.130.10">
    <property type="entry name" value="PUA domain"/>
    <property type="match status" value="1"/>
</dbReference>
<dbReference type="HAMAP" id="MF_00456">
    <property type="entry name" value="ProB"/>
    <property type="match status" value="1"/>
</dbReference>
<dbReference type="InterPro" id="IPR036393">
    <property type="entry name" value="AceGlu_kinase-like_sf"/>
</dbReference>
<dbReference type="InterPro" id="IPR001048">
    <property type="entry name" value="Asp/Glu/Uridylate_kinase"/>
</dbReference>
<dbReference type="InterPro" id="IPR041739">
    <property type="entry name" value="G5K_ProB"/>
</dbReference>
<dbReference type="InterPro" id="IPR001057">
    <property type="entry name" value="Glu/AcGlu_kinase"/>
</dbReference>
<dbReference type="InterPro" id="IPR011529">
    <property type="entry name" value="Glu_5kinase"/>
</dbReference>
<dbReference type="InterPro" id="IPR005715">
    <property type="entry name" value="Glu_5kinase/COase_Synthase"/>
</dbReference>
<dbReference type="InterPro" id="IPR019797">
    <property type="entry name" value="Glutamate_5-kinase_CS"/>
</dbReference>
<dbReference type="InterPro" id="IPR002478">
    <property type="entry name" value="PUA"/>
</dbReference>
<dbReference type="InterPro" id="IPR015947">
    <property type="entry name" value="PUA-like_sf"/>
</dbReference>
<dbReference type="InterPro" id="IPR036974">
    <property type="entry name" value="PUA_sf"/>
</dbReference>
<dbReference type="NCBIfam" id="TIGR01027">
    <property type="entry name" value="proB"/>
    <property type="match status" value="1"/>
</dbReference>
<dbReference type="PANTHER" id="PTHR43654">
    <property type="entry name" value="GLUTAMATE 5-KINASE"/>
    <property type="match status" value="1"/>
</dbReference>
<dbReference type="PANTHER" id="PTHR43654:SF1">
    <property type="entry name" value="ISOPENTENYL PHOSPHATE KINASE"/>
    <property type="match status" value="1"/>
</dbReference>
<dbReference type="Pfam" id="PF00696">
    <property type="entry name" value="AA_kinase"/>
    <property type="match status" value="1"/>
</dbReference>
<dbReference type="Pfam" id="PF01472">
    <property type="entry name" value="PUA"/>
    <property type="match status" value="1"/>
</dbReference>
<dbReference type="PIRSF" id="PIRSF000729">
    <property type="entry name" value="GK"/>
    <property type="match status" value="1"/>
</dbReference>
<dbReference type="PRINTS" id="PR00474">
    <property type="entry name" value="GLU5KINASE"/>
</dbReference>
<dbReference type="SMART" id="SM00359">
    <property type="entry name" value="PUA"/>
    <property type="match status" value="1"/>
</dbReference>
<dbReference type="SUPFAM" id="SSF53633">
    <property type="entry name" value="Carbamate kinase-like"/>
    <property type="match status" value="1"/>
</dbReference>
<dbReference type="SUPFAM" id="SSF88697">
    <property type="entry name" value="PUA domain-like"/>
    <property type="match status" value="1"/>
</dbReference>
<dbReference type="PROSITE" id="PS00902">
    <property type="entry name" value="GLUTAMATE_5_KINASE"/>
    <property type="match status" value="1"/>
</dbReference>
<dbReference type="PROSITE" id="PS50890">
    <property type="entry name" value="PUA"/>
    <property type="match status" value="1"/>
</dbReference>
<accession>C6DCX5</accession>
<gene>
    <name evidence="1" type="primary">proB</name>
    <name type="ordered locus">PC1_3284</name>
</gene>
<proteinExistence type="inferred from homology"/>
<sequence>MSGSQTLVVKLGTSVLTGGSRRLNRAHIVELVRQCAQQHAAGHRIVIVTSGAIAAGREHLGYPELPATIATKQLLAAVGQSRLIQLWEQLFSIYGIHVGQMLLTRADMEDRERFLNARDTMRALLDNNIVPVINENDAVATAEIKVGDNDNLSALAAILADADKLLLLTDQAGLFTADPRNNPDAELIREVNGINDALRSIAGDSVSGLGTGGMSTKLQAADVACRAGIDVVIAAGSKPGVIGDVIADISVGTRFHAVDAPLESRKHWIFGAPPAGEITVDDGALSAILERGSSLLPKGIRRVEGNFSRGEVIRVRSLAGRDVAHAVTRYNSDALRMIAGHHSQQIAEILGYEYGPVAIHRDDMIIN</sequence>
<name>PROB_PECCP</name>
<reference key="1">
    <citation type="submission" date="2009-07" db="EMBL/GenBank/DDBJ databases">
        <title>Complete sequence of Pectobacterium carotovorum subsp. carotovorum PC1.</title>
        <authorList>
            <consortium name="US DOE Joint Genome Institute"/>
            <person name="Lucas S."/>
            <person name="Copeland A."/>
            <person name="Lapidus A."/>
            <person name="Glavina del Rio T."/>
            <person name="Tice H."/>
            <person name="Bruce D."/>
            <person name="Goodwin L."/>
            <person name="Pitluck S."/>
            <person name="Munk A.C."/>
            <person name="Brettin T."/>
            <person name="Detter J.C."/>
            <person name="Han C."/>
            <person name="Tapia R."/>
            <person name="Larimer F."/>
            <person name="Land M."/>
            <person name="Hauser L."/>
            <person name="Kyrpides N."/>
            <person name="Mikhailova N."/>
            <person name="Balakrishnan V."/>
            <person name="Glasner J."/>
            <person name="Perna N.T."/>
        </authorList>
    </citation>
    <scope>NUCLEOTIDE SEQUENCE [LARGE SCALE GENOMIC DNA]</scope>
    <source>
        <strain>PC1</strain>
    </source>
</reference>
<keyword id="KW-0028">Amino-acid biosynthesis</keyword>
<keyword id="KW-0067">ATP-binding</keyword>
<keyword id="KW-0963">Cytoplasm</keyword>
<keyword id="KW-0418">Kinase</keyword>
<keyword id="KW-0547">Nucleotide-binding</keyword>
<keyword id="KW-0641">Proline biosynthesis</keyword>
<keyword id="KW-0808">Transferase</keyword>
<comment type="function">
    <text evidence="1">Catalyzes the transfer of a phosphate group to glutamate to form L-glutamate 5-phosphate.</text>
</comment>
<comment type="catalytic activity">
    <reaction evidence="1">
        <text>L-glutamate + ATP = L-glutamyl 5-phosphate + ADP</text>
        <dbReference type="Rhea" id="RHEA:14877"/>
        <dbReference type="ChEBI" id="CHEBI:29985"/>
        <dbReference type="ChEBI" id="CHEBI:30616"/>
        <dbReference type="ChEBI" id="CHEBI:58274"/>
        <dbReference type="ChEBI" id="CHEBI:456216"/>
        <dbReference type="EC" id="2.7.2.11"/>
    </reaction>
</comment>
<comment type="pathway">
    <text evidence="1">Amino-acid biosynthesis; L-proline biosynthesis; L-glutamate 5-semialdehyde from L-glutamate: step 1/2.</text>
</comment>
<comment type="subcellular location">
    <subcellularLocation>
        <location evidence="1">Cytoplasm</location>
    </subcellularLocation>
</comment>
<comment type="similarity">
    <text evidence="1">Belongs to the glutamate 5-kinase family.</text>
</comment>